<protein>
    <recommendedName>
        <fullName evidence="1">UvrABC system protein C</fullName>
        <shortName evidence="1">Protein UvrC</shortName>
    </recommendedName>
    <alternativeName>
        <fullName evidence="1">Excinuclease ABC subunit C</fullName>
    </alternativeName>
</protein>
<proteinExistence type="inferred from homology"/>
<accession>Q1B9D1</accession>
<organism>
    <name type="scientific">Mycobacterium sp. (strain MCS)</name>
    <dbReference type="NCBI Taxonomy" id="164756"/>
    <lineage>
        <taxon>Bacteria</taxon>
        <taxon>Bacillati</taxon>
        <taxon>Actinomycetota</taxon>
        <taxon>Actinomycetes</taxon>
        <taxon>Mycobacteriales</taxon>
        <taxon>Mycobacteriaceae</taxon>
        <taxon>Mycobacterium</taxon>
    </lineage>
</organism>
<comment type="function">
    <text evidence="1">The UvrABC repair system catalyzes the recognition and processing of DNA lesions. UvrC both incises the 5' and 3' sides of the lesion. The N-terminal half is responsible for the 3' incision and the C-terminal half is responsible for the 5' incision.</text>
</comment>
<comment type="subunit">
    <text evidence="1">Interacts with UvrB in an incision complex.</text>
</comment>
<comment type="subcellular location">
    <subcellularLocation>
        <location evidence="1">Cytoplasm</location>
    </subcellularLocation>
</comment>
<comment type="similarity">
    <text evidence="1">Belongs to the UvrC family.</text>
</comment>
<keyword id="KW-0963">Cytoplasm</keyword>
<keyword id="KW-0227">DNA damage</keyword>
<keyword id="KW-0228">DNA excision</keyword>
<keyword id="KW-0234">DNA repair</keyword>
<keyword id="KW-0267">Excision nuclease</keyword>
<keyword id="KW-0742">SOS response</keyword>
<sequence length="676" mass="74809">MPDPSTYRPAPGSIPVEPGVYRFRDPHGRVIYVGKAKSLRSRLNSYFADLSGLAPRTRQMVMTAAKVEWTVVNTEVEALQLEYNWIKEFDPRFNIRYRDDKSYPVLAVTLNEEFPRLKVYRGPRKKGVRYFGPYSHAWAIRETVDLLTRVFPARTCSAGVFKRHNQIDRPCLLGYIDKCSAPCVGRVSAEQHRQIVLDFCDFLAGKTDRLVRDLERKMTAAAEDLDFERAARLRDDIGALRRALEKQTVVFGDGTDADVVAFADDDLEAAVQVFHVRGGRVRGQRGWIVEKSGEPGESGEGQLVEQFLTQFYGDQAELGSAGDNAGDSGQDEATNPVPRQVLVPCLPDNADELTEWLSQLRGSRVALRVPQRGDKKALFETVQRNAKEALAQHKLKRAGDFTARTAALQSIQDTLGLADAPLRIECIDISHVQGTDVVASLVVFEDGLPRKSDYRHYAIREAAGDGRSDDVASIAEVTRRRFYRHLHDTQHPTELSAEGKSRKFAYPPNLFVVDGGAPQVNAAQAVLDELGISDVAVIGLAKRLEEVWVPSGSDLGPEPIILPRNSEGLYLLQRVRDEAHRFAITYHRSKRSKRMTASALDSVRGLGEHRRKALVTHFGSVARLKEASVEEITAVPGIGVTTARAVLEALGVPQAAPADSDTAAAVIDDDQRRVTG</sequence>
<evidence type="ECO:0000255" key="1">
    <source>
        <dbReference type="HAMAP-Rule" id="MF_00203"/>
    </source>
</evidence>
<name>UVRC_MYCSS</name>
<dbReference type="EMBL" id="CP000384">
    <property type="protein sequence ID" value="ABG08503.1"/>
    <property type="molecule type" value="Genomic_DNA"/>
</dbReference>
<dbReference type="SMR" id="Q1B9D1"/>
<dbReference type="KEGG" id="mmc:Mmcs_2395"/>
<dbReference type="HOGENOM" id="CLU_014841_1_1_11"/>
<dbReference type="BioCyc" id="MSP164756:G1G6O-2447-MONOMER"/>
<dbReference type="GO" id="GO:0005737">
    <property type="term" value="C:cytoplasm"/>
    <property type="evidence" value="ECO:0007669"/>
    <property type="project" value="UniProtKB-SubCell"/>
</dbReference>
<dbReference type="GO" id="GO:0009380">
    <property type="term" value="C:excinuclease repair complex"/>
    <property type="evidence" value="ECO:0007669"/>
    <property type="project" value="InterPro"/>
</dbReference>
<dbReference type="GO" id="GO:0003677">
    <property type="term" value="F:DNA binding"/>
    <property type="evidence" value="ECO:0007669"/>
    <property type="project" value="UniProtKB-UniRule"/>
</dbReference>
<dbReference type="GO" id="GO:0009381">
    <property type="term" value="F:excinuclease ABC activity"/>
    <property type="evidence" value="ECO:0007669"/>
    <property type="project" value="UniProtKB-UniRule"/>
</dbReference>
<dbReference type="GO" id="GO:0006289">
    <property type="term" value="P:nucleotide-excision repair"/>
    <property type="evidence" value="ECO:0007669"/>
    <property type="project" value="UniProtKB-UniRule"/>
</dbReference>
<dbReference type="GO" id="GO:0009432">
    <property type="term" value="P:SOS response"/>
    <property type="evidence" value="ECO:0007669"/>
    <property type="project" value="UniProtKB-UniRule"/>
</dbReference>
<dbReference type="CDD" id="cd10434">
    <property type="entry name" value="GIY-YIG_UvrC_Cho"/>
    <property type="match status" value="1"/>
</dbReference>
<dbReference type="FunFam" id="3.30.420.340:FF:000003">
    <property type="entry name" value="UvrABC system protein C"/>
    <property type="match status" value="1"/>
</dbReference>
<dbReference type="FunFam" id="3.40.1440.10:FF:000001">
    <property type="entry name" value="UvrABC system protein C"/>
    <property type="match status" value="1"/>
</dbReference>
<dbReference type="Gene3D" id="1.10.150.20">
    <property type="entry name" value="5' to 3' exonuclease, C-terminal subdomain"/>
    <property type="match status" value="1"/>
</dbReference>
<dbReference type="Gene3D" id="3.40.1440.10">
    <property type="entry name" value="GIY-YIG endonuclease"/>
    <property type="match status" value="1"/>
</dbReference>
<dbReference type="Gene3D" id="4.10.860.10">
    <property type="entry name" value="UVR domain"/>
    <property type="match status" value="1"/>
</dbReference>
<dbReference type="Gene3D" id="3.30.420.340">
    <property type="entry name" value="UvrC, RNAse H endonuclease domain"/>
    <property type="match status" value="1"/>
</dbReference>
<dbReference type="HAMAP" id="MF_00203">
    <property type="entry name" value="UvrC"/>
    <property type="match status" value="1"/>
</dbReference>
<dbReference type="InterPro" id="IPR000305">
    <property type="entry name" value="GIY-YIG_endonuc"/>
</dbReference>
<dbReference type="InterPro" id="IPR035901">
    <property type="entry name" value="GIY-YIG_endonuc_sf"/>
</dbReference>
<dbReference type="InterPro" id="IPR047296">
    <property type="entry name" value="GIY-YIG_UvrC_Cho"/>
</dbReference>
<dbReference type="InterPro" id="IPR003583">
    <property type="entry name" value="Hlx-hairpin-Hlx_DNA-bd_motif"/>
</dbReference>
<dbReference type="InterPro" id="IPR010994">
    <property type="entry name" value="RuvA_2-like"/>
</dbReference>
<dbReference type="InterPro" id="IPR001943">
    <property type="entry name" value="UVR_dom"/>
</dbReference>
<dbReference type="InterPro" id="IPR036876">
    <property type="entry name" value="UVR_dom_sf"/>
</dbReference>
<dbReference type="InterPro" id="IPR050066">
    <property type="entry name" value="UvrABC_protein_C"/>
</dbReference>
<dbReference type="InterPro" id="IPR004791">
    <property type="entry name" value="UvrC"/>
</dbReference>
<dbReference type="InterPro" id="IPR001162">
    <property type="entry name" value="UvrC_RNase_H_dom"/>
</dbReference>
<dbReference type="InterPro" id="IPR038476">
    <property type="entry name" value="UvrC_RNase_H_dom_sf"/>
</dbReference>
<dbReference type="NCBIfam" id="NF001824">
    <property type="entry name" value="PRK00558.1-5"/>
    <property type="match status" value="1"/>
</dbReference>
<dbReference type="NCBIfam" id="TIGR00194">
    <property type="entry name" value="uvrC"/>
    <property type="match status" value="1"/>
</dbReference>
<dbReference type="PANTHER" id="PTHR30562:SF1">
    <property type="entry name" value="UVRABC SYSTEM PROTEIN C"/>
    <property type="match status" value="1"/>
</dbReference>
<dbReference type="PANTHER" id="PTHR30562">
    <property type="entry name" value="UVRC/OXIDOREDUCTASE"/>
    <property type="match status" value="1"/>
</dbReference>
<dbReference type="Pfam" id="PF01541">
    <property type="entry name" value="GIY-YIG"/>
    <property type="match status" value="1"/>
</dbReference>
<dbReference type="Pfam" id="PF14520">
    <property type="entry name" value="HHH_5"/>
    <property type="match status" value="1"/>
</dbReference>
<dbReference type="Pfam" id="PF02151">
    <property type="entry name" value="UVR"/>
    <property type="match status" value="1"/>
</dbReference>
<dbReference type="Pfam" id="PF22920">
    <property type="entry name" value="UvrC_RNaseH"/>
    <property type="match status" value="1"/>
</dbReference>
<dbReference type="Pfam" id="PF08459">
    <property type="entry name" value="UvrC_RNaseH_dom"/>
    <property type="match status" value="1"/>
</dbReference>
<dbReference type="SMART" id="SM00465">
    <property type="entry name" value="GIYc"/>
    <property type="match status" value="1"/>
</dbReference>
<dbReference type="SMART" id="SM00278">
    <property type="entry name" value="HhH1"/>
    <property type="match status" value="2"/>
</dbReference>
<dbReference type="SUPFAM" id="SSF46600">
    <property type="entry name" value="C-terminal UvrC-binding domain of UvrB"/>
    <property type="match status" value="1"/>
</dbReference>
<dbReference type="SUPFAM" id="SSF82771">
    <property type="entry name" value="GIY-YIG endonuclease"/>
    <property type="match status" value="1"/>
</dbReference>
<dbReference type="SUPFAM" id="SSF47781">
    <property type="entry name" value="RuvA domain 2-like"/>
    <property type="match status" value="1"/>
</dbReference>
<dbReference type="PROSITE" id="PS50164">
    <property type="entry name" value="GIY_YIG"/>
    <property type="match status" value="1"/>
</dbReference>
<dbReference type="PROSITE" id="PS50151">
    <property type="entry name" value="UVR"/>
    <property type="match status" value="1"/>
</dbReference>
<dbReference type="PROSITE" id="PS50165">
    <property type="entry name" value="UVRC"/>
    <property type="match status" value="1"/>
</dbReference>
<reference key="1">
    <citation type="submission" date="2006-06" db="EMBL/GenBank/DDBJ databases">
        <title>Complete sequence of chromosome of Mycobacterium sp. MCS.</title>
        <authorList>
            <consortium name="US DOE Joint Genome Institute"/>
            <person name="Copeland A."/>
            <person name="Lucas S."/>
            <person name="Lapidus A."/>
            <person name="Barry K."/>
            <person name="Detter J.C."/>
            <person name="Glavina del Rio T."/>
            <person name="Hammon N."/>
            <person name="Israni S."/>
            <person name="Dalin E."/>
            <person name="Tice H."/>
            <person name="Pitluck S."/>
            <person name="Martinez M."/>
            <person name="Schmutz J."/>
            <person name="Larimer F."/>
            <person name="Land M."/>
            <person name="Hauser L."/>
            <person name="Kyrpides N."/>
            <person name="Kim E."/>
            <person name="Miller C.D."/>
            <person name="Hughes J.E."/>
            <person name="Anderson A.J."/>
            <person name="Sims R.C."/>
            <person name="Richardson P."/>
        </authorList>
    </citation>
    <scope>NUCLEOTIDE SEQUENCE [LARGE SCALE GENOMIC DNA]</scope>
    <source>
        <strain>MCS</strain>
    </source>
</reference>
<feature type="chain" id="PRO_0000264913" description="UvrABC system protein C">
    <location>
        <begin position="1"/>
        <end position="676"/>
    </location>
</feature>
<feature type="domain" description="GIY-YIG" evidence="1">
    <location>
        <begin position="16"/>
        <end position="95"/>
    </location>
</feature>
<feature type="domain" description="UVR" evidence="1">
    <location>
        <begin position="208"/>
        <end position="243"/>
    </location>
</feature>
<gene>
    <name evidence="1" type="primary">uvrC</name>
    <name type="ordered locus">Mmcs_2395</name>
</gene>